<feature type="chain" id="PRO_1000068921" description="Galactose-6-phosphate isomerase subunit LacA">
    <location>
        <begin position="1"/>
        <end position="142"/>
    </location>
</feature>
<organism>
    <name type="scientific">Staphylococcus aureus (strain Mu3 / ATCC 700698)</name>
    <dbReference type="NCBI Taxonomy" id="418127"/>
    <lineage>
        <taxon>Bacteria</taxon>
        <taxon>Bacillati</taxon>
        <taxon>Bacillota</taxon>
        <taxon>Bacilli</taxon>
        <taxon>Bacillales</taxon>
        <taxon>Staphylococcaceae</taxon>
        <taxon>Staphylococcus</taxon>
    </lineage>
</organism>
<accession>A7X579</accession>
<keyword id="KW-0413">Isomerase</keyword>
<keyword id="KW-0423">Lactose metabolism</keyword>
<sequence>MAIIIGSDEAGKRLKEVIKSYLLDNKYDVVDVTEGQEVDFVDATLAVAKDVQSQEGNLGIVIDAFGAGSFMVATKIKGMIAAEVSDERSGYMTRGHNNSRMITMGSEIVGDTLAKNVVKGFVEGKYDGGRHQIRVDMLNKMC</sequence>
<comment type="catalytic activity">
    <reaction evidence="1">
        <text>aldehydo-D-galactose 6-phosphate = keto-D-tagatose 6-phosphate</text>
        <dbReference type="Rhea" id="RHEA:13033"/>
        <dbReference type="ChEBI" id="CHEBI:58255"/>
        <dbReference type="ChEBI" id="CHEBI:134283"/>
        <dbReference type="EC" id="5.3.1.26"/>
    </reaction>
</comment>
<comment type="pathway">
    <text evidence="1">Carbohydrate metabolism; D-galactose 6-phosphate degradation; D-tagatose 6-phosphate from D-galactose 6-phosphate: step 1/1.</text>
</comment>
<comment type="subunit">
    <text evidence="1">Heteromultimeric protein consisting of LacA and LacB.</text>
</comment>
<comment type="similarity">
    <text evidence="1">Belongs to the LacAB/RpiB family.</text>
</comment>
<evidence type="ECO:0000255" key="1">
    <source>
        <dbReference type="HAMAP-Rule" id="MF_01555"/>
    </source>
</evidence>
<reference key="1">
    <citation type="journal article" date="2008" name="Antimicrob. Agents Chemother.">
        <title>Mutated response regulator graR is responsible for phenotypic conversion of Staphylococcus aureus from heterogeneous vancomycin-intermediate resistance to vancomycin-intermediate resistance.</title>
        <authorList>
            <person name="Neoh H.-M."/>
            <person name="Cui L."/>
            <person name="Yuzawa H."/>
            <person name="Takeuchi F."/>
            <person name="Matsuo M."/>
            <person name="Hiramatsu K."/>
        </authorList>
    </citation>
    <scope>NUCLEOTIDE SEQUENCE [LARGE SCALE GENOMIC DNA]</scope>
    <source>
        <strain>Mu3 / ATCC 700698</strain>
    </source>
</reference>
<name>LACA_STAA1</name>
<gene>
    <name evidence="1" type="primary">lacA</name>
    <name type="ordered locus">SAHV_2179</name>
</gene>
<dbReference type="EC" id="5.3.1.26" evidence="1"/>
<dbReference type="EMBL" id="AP009324">
    <property type="protein sequence ID" value="BAF79062.1"/>
    <property type="molecule type" value="Genomic_DNA"/>
</dbReference>
<dbReference type="RefSeq" id="WP_000974608.1">
    <property type="nucleotide sequence ID" value="NZ_CTYB01000055.1"/>
</dbReference>
<dbReference type="SMR" id="A7X579"/>
<dbReference type="GeneID" id="98347039"/>
<dbReference type="KEGG" id="saw:SAHV_2179"/>
<dbReference type="HOGENOM" id="CLU_091396_4_2_9"/>
<dbReference type="UniPathway" id="UPA00702">
    <property type="reaction ID" value="UER00714"/>
</dbReference>
<dbReference type="GO" id="GO:0050044">
    <property type="term" value="F:galactose-6-phosphate isomerase activity"/>
    <property type="evidence" value="ECO:0007669"/>
    <property type="project" value="UniProtKB-UniRule"/>
</dbReference>
<dbReference type="GO" id="GO:0004751">
    <property type="term" value="F:ribose-5-phosphate isomerase activity"/>
    <property type="evidence" value="ECO:0007669"/>
    <property type="project" value="TreeGrafter"/>
</dbReference>
<dbReference type="GO" id="GO:0019316">
    <property type="term" value="P:D-allose catabolic process"/>
    <property type="evidence" value="ECO:0007669"/>
    <property type="project" value="TreeGrafter"/>
</dbReference>
<dbReference type="GO" id="GO:0019388">
    <property type="term" value="P:galactose catabolic process"/>
    <property type="evidence" value="ECO:0007669"/>
    <property type="project" value="UniProtKB-UniPathway"/>
</dbReference>
<dbReference type="GO" id="GO:0019512">
    <property type="term" value="P:lactose catabolic process via tagatose-6-phosphate"/>
    <property type="evidence" value="ECO:0007669"/>
    <property type="project" value="UniProtKB-UniRule"/>
</dbReference>
<dbReference type="GO" id="GO:0009052">
    <property type="term" value="P:pentose-phosphate shunt, non-oxidative branch"/>
    <property type="evidence" value="ECO:0007669"/>
    <property type="project" value="TreeGrafter"/>
</dbReference>
<dbReference type="Gene3D" id="3.40.1400.10">
    <property type="entry name" value="Sugar-phosphate isomerase, RpiB/LacA/LacB"/>
    <property type="match status" value="1"/>
</dbReference>
<dbReference type="HAMAP" id="MF_01555">
    <property type="entry name" value="LacA"/>
    <property type="match status" value="1"/>
</dbReference>
<dbReference type="InterPro" id="IPR004783">
    <property type="entry name" value="LacA"/>
</dbReference>
<dbReference type="InterPro" id="IPR003500">
    <property type="entry name" value="RpiB_LacA_LacB"/>
</dbReference>
<dbReference type="InterPro" id="IPR036569">
    <property type="entry name" value="RpiB_LacA_LacB_sf"/>
</dbReference>
<dbReference type="NCBIfam" id="TIGR01118">
    <property type="entry name" value="lacA"/>
    <property type="match status" value="1"/>
</dbReference>
<dbReference type="NCBIfam" id="NF006380">
    <property type="entry name" value="PRK08621.1"/>
    <property type="match status" value="1"/>
</dbReference>
<dbReference type="NCBIfam" id="TIGR00689">
    <property type="entry name" value="rpiB_lacA_lacB"/>
    <property type="match status" value="1"/>
</dbReference>
<dbReference type="PANTHER" id="PTHR30345:SF5">
    <property type="entry name" value="GALACTOSE-6-PHOSPHATE ISOMERASE SUBUNIT LACA"/>
    <property type="match status" value="1"/>
</dbReference>
<dbReference type="PANTHER" id="PTHR30345">
    <property type="entry name" value="RIBOSE-5-PHOSPHATE ISOMERASE B"/>
    <property type="match status" value="1"/>
</dbReference>
<dbReference type="Pfam" id="PF02502">
    <property type="entry name" value="LacAB_rpiB"/>
    <property type="match status" value="1"/>
</dbReference>
<dbReference type="PIRSF" id="PIRSF005384">
    <property type="entry name" value="RpiB_LacA_B"/>
    <property type="match status" value="1"/>
</dbReference>
<dbReference type="SUPFAM" id="SSF89623">
    <property type="entry name" value="Ribose/Galactose isomerase RpiB/AlsB"/>
    <property type="match status" value="1"/>
</dbReference>
<proteinExistence type="inferred from homology"/>
<protein>
    <recommendedName>
        <fullName evidence="1">Galactose-6-phosphate isomerase subunit LacA</fullName>
        <ecNumber evidence="1">5.3.1.26</ecNumber>
    </recommendedName>
</protein>